<sequence length="856" mass="95907">MDISKGLPGMQGGLHIWISENRKMVPVPEGAYGNFFEEHCYVILHVPQSPKATQGASSDLHYWVGKQAGAEAQGAAEAFQQRLQDELGGQTVLHREAQGHESDCFCSYFRPGIIYRKGGLASDLKHVETNLFNIQRLLHIKGRKHVSATEVELSWNSFNKGDIFLLDLGKMMIQWNGPKTSISEKARGLALTYSLRDRERGGGRAQIGVVDDEAKAPDLMQIMEAVLGRRVGSLRAATPSKDINQLQKANVRLYHVYEKGKDLVVLELATPPLTQDLLQEEDFYILDQGGFKIYVWQGRMSSLQERKAAFSRAVGFIQAKGYPTYTNVEVVNDGAESAAFKQLFRTWSEKRRRNQKLGGRDKSIHVKLDVGKLHTQPKLAAQLRMVDDGSGKVEVWCIQDLHRQPVDPKRHGQLCAGNCYLVLYTYQRLGRVQYILYLWQGHQATADEIEALNSNAEELDVMYGGVLVQEHVTMGSEPPHFLAIFQGQLVIFQERAGHHGKGQSASTTRLFQVQGTDSHNTRTMEVPARASSLNSSDIFLLVTASVCYLWFGKGCNGDQREMARVVVTVISRKNEETVLEGQEPPHFWEALGGRAPYPSNKRLPEEVPSFQPRLFECSSHMGCLVLAEVGFFSQEDLDKYDIMLLDTWQEIFLWLGEAASEWKEAVAWGQEYLKTHPAGRSPATPIVLVKQGHEPPTFIGWFFTWDPYKWTSHPSHKEVVDGSPAAASTISEITAEVNNLRLSRWPGNGRAGAVALQALKGSQDSSENDLVRSPKSAGSRTSSSVSSTSATINGGLRREQLMHQAVEDLPEGVDPARREFYLSDSDFQDIFGKSKEEFYSMATWRQRQEKKQLGFF</sequence>
<accession>O15195</accession>
<accession>A8MZP1</accession>
<accession>Q9BT80</accession>
<accession>Q9BWH7</accession>
<proteinExistence type="evidence at protein level"/>
<reference key="1">
    <citation type="journal article" date="2006" name="Nature">
        <title>The DNA sequence, annotation and analysis of human chromosome 3.</title>
        <authorList>
            <person name="Muzny D.M."/>
            <person name="Scherer S.E."/>
            <person name="Kaul R."/>
            <person name="Wang J."/>
            <person name="Yu J."/>
            <person name="Sudbrak R."/>
            <person name="Buhay C.J."/>
            <person name="Chen R."/>
            <person name="Cree A."/>
            <person name="Ding Y."/>
            <person name="Dugan-Rocha S."/>
            <person name="Gill R."/>
            <person name="Gunaratne P."/>
            <person name="Harris R.A."/>
            <person name="Hawes A.C."/>
            <person name="Hernandez J."/>
            <person name="Hodgson A.V."/>
            <person name="Hume J."/>
            <person name="Jackson A."/>
            <person name="Khan Z.M."/>
            <person name="Kovar-Smith C."/>
            <person name="Lewis L.R."/>
            <person name="Lozado R.J."/>
            <person name="Metzker M.L."/>
            <person name="Milosavljevic A."/>
            <person name="Miner G.R."/>
            <person name="Morgan M.B."/>
            <person name="Nazareth L.V."/>
            <person name="Scott G."/>
            <person name="Sodergren E."/>
            <person name="Song X.-Z."/>
            <person name="Steffen D."/>
            <person name="Wei S."/>
            <person name="Wheeler D.A."/>
            <person name="Wright M.W."/>
            <person name="Worley K.C."/>
            <person name="Yuan Y."/>
            <person name="Zhang Z."/>
            <person name="Adams C.Q."/>
            <person name="Ansari-Lari M.A."/>
            <person name="Ayele M."/>
            <person name="Brown M.J."/>
            <person name="Chen G."/>
            <person name="Chen Z."/>
            <person name="Clendenning J."/>
            <person name="Clerc-Blankenburg K.P."/>
            <person name="Chen R."/>
            <person name="Chen Z."/>
            <person name="Davis C."/>
            <person name="Delgado O."/>
            <person name="Dinh H.H."/>
            <person name="Dong W."/>
            <person name="Draper H."/>
            <person name="Ernst S."/>
            <person name="Fu G."/>
            <person name="Gonzalez-Garay M.L."/>
            <person name="Garcia D.K."/>
            <person name="Gillett W."/>
            <person name="Gu J."/>
            <person name="Hao B."/>
            <person name="Haugen E."/>
            <person name="Havlak P."/>
            <person name="He X."/>
            <person name="Hennig S."/>
            <person name="Hu S."/>
            <person name="Huang W."/>
            <person name="Jackson L.R."/>
            <person name="Jacob L.S."/>
            <person name="Kelly S.H."/>
            <person name="Kube M."/>
            <person name="Levy R."/>
            <person name="Li Z."/>
            <person name="Liu B."/>
            <person name="Liu J."/>
            <person name="Liu W."/>
            <person name="Lu J."/>
            <person name="Maheshwari M."/>
            <person name="Nguyen B.-V."/>
            <person name="Okwuonu G.O."/>
            <person name="Palmeiri A."/>
            <person name="Pasternak S."/>
            <person name="Perez L.M."/>
            <person name="Phelps K.A."/>
            <person name="Plopper F.J."/>
            <person name="Qiang B."/>
            <person name="Raymond C."/>
            <person name="Rodriguez R."/>
            <person name="Saenphimmachak C."/>
            <person name="Santibanez J."/>
            <person name="Shen H."/>
            <person name="Shen Y."/>
            <person name="Subramanian S."/>
            <person name="Tabor P.E."/>
            <person name="Verduzco D."/>
            <person name="Waldron L."/>
            <person name="Wang J."/>
            <person name="Wang J."/>
            <person name="Wang Q."/>
            <person name="Williams G.A."/>
            <person name="Wong G.K.-S."/>
            <person name="Yao Z."/>
            <person name="Zhang J."/>
            <person name="Zhang X."/>
            <person name="Zhao G."/>
            <person name="Zhou J."/>
            <person name="Zhou Y."/>
            <person name="Nelson D."/>
            <person name="Lehrach H."/>
            <person name="Reinhardt R."/>
            <person name="Naylor S.L."/>
            <person name="Yang H."/>
            <person name="Olson M."/>
            <person name="Weinstock G."/>
            <person name="Gibbs R.A."/>
        </authorList>
    </citation>
    <scope>NUCLEOTIDE SEQUENCE [LARGE SCALE GENOMIC DNA]</scope>
</reference>
<reference key="2">
    <citation type="submission" date="2005-07" db="EMBL/GenBank/DDBJ databases">
        <authorList>
            <person name="Mural R.J."/>
            <person name="Istrail S."/>
            <person name="Sutton G.G."/>
            <person name="Florea L."/>
            <person name="Halpern A.L."/>
            <person name="Mobarry C.M."/>
            <person name="Lippert R."/>
            <person name="Walenz B."/>
            <person name="Shatkay H."/>
            <person name="Dew I."/>
            <person name="Miller J.R."/>
            <person name="Flanigan M.J."/>
            <person name="Edwards N.J."/>
            <person name="Bolanos R."/>
            <person name="Fasulo D."/>
            <person name="Halldorsson B.V."/>
            <person name="Hannenhalli S."/>
            <person name="Turner R."/>
            <person name="Yooseph S."/>
            <person name="Lu F."/>
            <person name="Nusskern D.R."/>
            <person name="Shue B.C."/>
            <person name="Zheng X.H."/>
            <person name="Zhong F."/>
            <person name="Delcher A.L."/>
            <person name="Huson D.H."/>
            <person name="Kravitz S.A."/>
            <person name="Mouchard L."/>
            <person name="Reinert K."/>
            <person name="Remington K.A."/>
            <person name="Clark A.G."/>
            <person name="Waterman M.S."/>
            <person name="Eichler E.E."/>
            <person name="Adams M.D."/>
            <person name="Hunkapiller M.W."/>
            <person name="Myers E.W."/>
            <person name="Venter J.C."/>
        </authorList>
    </citation>
    <scope>NUCLEOTIDE SEQUENCE [LARGE SCALE GENOMIC DNA]</scope>
</reference>
<reference key="3">
    <citation type="journal article" date="2004" name="Genome Res.">
        <title>The status, quality, and expansion of the NIH full-length cDNA project: the Mammalian Gene Collection (MGC).</title>
        <authorList>
            <consortium name="The MGC Project Team"/>
        </authorList>
    </citation>
    <scope>NUCLEOTIDE SEQUENCE [LARGE SCALE MRNA] (ISOFORM 2)</scope>
    <scope>NUCLEOTIDE SEQUENCE [LARGE SCALE MRNA] OF 127-856 (ISOFORM 1)</scope>
    <source>
        <tissue>Eye</tissue>
        <tissue>Pancreas</tissue>
    </source>
</reference>
<reference key="4">
    <citation type="journal article" date="1997" name="DNA Res.">
        <title>Sequence analysis of a 685-kb genomic region on chromosome 3p22-p21.3 that is homozygously deleted in a lung carcinoma cell line.</title>
        <authorList>
            <person name="Ishikawa S."/>
            <person name="Kai M."/>
            <person name="Tamari M."/>
            <person name="Takei Y."/>
            <person name="Takeuchi K."/>
            <person name="Bandou H."/>
            <person name="Yamane Y."/>
            <person name="Ogawa M."/>
            <person name="Nakamura Y."/>
        </authorList>
    </citation>
    <scope>NUCLEOTIDE SEQUENCE [MRNA] OF 171-856 (ISOFORM 1)</scope>
    <source>
        <tissue>Fetal brain</tissue>
        <tissue>Lung</tissue>
        <tissue>Pancreas</tissue>
    </source>
</reference>
<reference key="5">
    <citation type="journal article" date="2018" name="Brain">
        <title>Expanding the phenotype of TRAK1 mutations: hyperekplexia and refractory status epilepticus.</title>
        <authorList>
            <person name="Sagie S."/>
            <person name="Lerman-Sagie T."/>
            <person name="Maljevic S."/>
            <person name="Yosovich K."/>
            <person name="Detert K."/>
            <person name="Chung S.K."/>
            <person name="Rees M.I."/>
            <person name="Lerche H."/>
            <person name="Lev D."/>
        </authorList>
    </citation>
    <scope>VARIANT GLN-798</scope>
</reference>
<feature type="chain" id="PRO_0000218738" description="Villin-like protein">
    <location>
        <begin position="1"/>
        <end position="856"/>
    </location>
</feature>
<feature type="repeat" description="Gelsolin-like 1">
    <location>
        <begin position="22"/>
        <end position="74"/>
    </location>
</feature>
<feature type="repeat" description="Gelsolin-like 2">
    <location>
        <begin position="146"/>
        <end position="186"/>
    </location>
</feature>
<feature type="repeat" description="Gelsolin-like 3">
    <location>
        <begin position="263"/>
        <end position="307"/>
    </location>
</feature>
<feature type="repeat" description="Gelsolin-like 4">
    <location>
        <begin position="401"/>
        <end position="450"/>
    </location>
</feature>
<feature type="repeat" description="Gelsolin-like 5">
    <location>
        <begin position="521"/>
        <end position="561"/>
    </location>
</feature>
<feature type="repeat" description="Gelsolin-like 6">
    <location>
        <begin position="624"/>
        <end position="665"/>
    </location>
</feature>
<feature type="domain" description="HP" evidence="1">
    <location>
        <begin position="790"/>
        <end position="856"/>
    </location>
</feature>
<feature type="region of interest" description="Disordered" evidence="2">
    <location>
        <begin position="762"/>
        <end position="796"/>
    </location>
</feature>
<feature type="compositionally biased region" description="Low complexity" evidence="2">
    <location>
        <begin position="776"/>
        <end position="791"/>
    </location>
</feature>
<feature type="splice variant" id="VSP_006729" description="In isoform 2." evidence="4">
    <location>
        <begin position="262"/>
        <end position="275"/>
    </location>
</feature>
<feature type="sequence variant" id="VAR_052938" description="In dbSNP:rs1892814.">
    <original>F</original>
    <variation>L</variation>
    <location>
        <position position="610"/>
    </location>
</feature>
<feature type="sequence variant" id="VAR_052939" description="In dbSNP:rs9816693.">
    <original>L</original>
    <variation>F</variation>
    <location>
        <position position="740"/>
    </location>
</feature>
<feature type="sequence variant" id="VAR_081640" description="In dbSNP:rs147292695." evidence="3">
    <original>R</original>
    <variation>Q</variation>
    <location>
        <position position="798"/>
    </location>
</feature>
<feature type="sequence conflict" description="In Ref. 4; BAA21668." evidence="5" ref="4">
    <original>R</original>
    <variation>C</variation>
    <location>
        <position position="229"/>
    </location>
</feature>
<keyword id="KW-0117">Actin capping</keyword>
<keyword id="KW-0009">Actin-binding</keyword>
<keyword id="KW-0025">Alternative splicing</keyword>
<keyword id="KW-0106">Calcium</keyword>
<keyword id="KW-1267">Proteomics identification</keyword>
<keyword id="KW-1185">Reference proteome</keyword>
<keyword id="KW-0677">Repeat</keyword>
<dbReference type="EMBL" id="AC105752">
    <property type="status" value="NOT_ANNOTATED_CDS"/>
    <property type="molecule type" value="Genomic_DNA"/>
</dbReference>
<dbReference type="EMBL" id="CH471055">
    <property type="protein sequence ID" value="EAW64506.1"/>
    <property type="molecule type" value="Genomic_DNA"/>
</dbReference>
<dbReference type="EMBL" id="BC000243">
    <property type="protein sequence ID" value="AAH00243.1"/>
    <property type="status" value="ALT_INIT"/>
    <property type="molecule type" value="mRNA"/>
</dbReference>
<dbReference type="EMBL" id="BC004300">
    <property type="protein sequence ID" value="AAH04300.1"/>
    <property type="status" value="ALT_INIT"/>
    <property type="molecule type" value="mRNA"/>
</dbReference>
<dbReference type="EMBL" id="D88154">
    <property type="protein sequence ID" value="BAA21668.1"/>
    <property type="molecule type" value="mRNA"/>
</dbReference>
<dbReference type="CCDS" id="CCDS2670.2">
    <molecule id="O15195-1"/>
</dbReference>
<dbReference type="PIR" id="JC5708">
    <property type="entry name" value="JC5708"/>
</dbReference>
<dbReference type="RefSeq" id="NP_001371967.1">
    <molecule id="O15195-1"/>
    <property type="nucleotide sequence ID" value="NM_001385038.1"/>
</dbReference>
<dbReference type="RefSeq" id="NP_001371968.1">
    <molecule id="O15195-1"/>
    <property type="nucleotide sequence ID" value="NM_001385039.1"/>
</dbReference>
<dbReference type="RefSeq" id="NP_056957.3">
    <molecule id="O15195-1"/>
    <property type="nucleotide sequence ID" value="NM_015873.4"/>
</dbReference>
<dbReference type="RefSeq" id="XP_005265248.1">
    <property type="nucleotide sequence ID" value="XM_005265191.3"/>
</dbReference>
<dbReference type="RefSeq" id="XP_005265249.1">
    <property type="nucleotide sequence ID" value="XM_005265192.4"/>
</dbReference>
<dbReference type="RefSeq" id="XP_006713247.1">
    <property type="nucleotide sequence ID" value="XM_006713184.3"/>
</dbReference>
<dbReference type="RefSeq" id="XP_011532072.1">
    <property type="nucleotide sequence ID" value="XM_011533770.2"/>
</dbReference>
<dbReference type="SMR" id="O15195"/>
<dbReference type="BioGRID" id="119155">
    <property type="interactions" value="9"/>
</dbReference>
<dbReference type="FunCoup" id="O15195">
    <property type="interactions" value="27"/>
</dbReference>
<dbReference type="IntAct" id="O15195">
    <property type="interactions" value="11"/>
</dbReference>
<dbReference type="STRING" id="9606.ENSP00000283713"/>
<dbReference type="GlyGen" id="O15195">
    <property type="glycosylation" value="1 site, 1 O-linked glycan (1 site)"/>
</dbReference>
<dbReference type="iPTMnet" id="O15195"/>
<dbReference type="PhosphoSitePlus" id="O15195"/>
<dbReference type="BioMuta" id="VILL"/>
<dbReference type="jPOST" id="O15195"/>
<dbReference type="MassIVE" id="O15195"/>
<dbReference type="PaxDb" id="9606-ENSP00000283713"/>
<dbReference type="PeptideAtlas" id="O15195"/>
<dbReference type="ProteomicsDB" id="48500">
    <molecule id="O15195-1"/>
</dbReference>
<dbReference type="ProteomicsDB" id="48501">
    <molecule id="O15195-2"/>
</dbReference>
<dbReference type="Antibodypedia" id="48930">
    <property type="antibodies" value="100 antibodies from 22 providers"/>
</dbReference>
<dbReference type="DNASU" id="50853"/>
<dbReference type="Ensembl" id="ENST00000283713.10">
    <molecule id="O15195-1"/>
    <property type="protein sequence ID" value="ENSP00000283713.6"/>
    <property type="gene ID" value="ENSG00000136059.16"/>
</dbReference>
<dbReference type="Ensembl" id="ENST00000383759.7">
    <molecule id="O15195-1"/>
    <property type="protein sequence ID" value="ENSP00000373266.2"/>
    <property type="gene ID" value="ENSG00000136059.16"/>
</dbReference>
<dbReference type="GeneID" id="50853"/>
<dbReference type="KEGG" id="hsa:50853"/>
<dbReference type="MANE-Select" id="ENST00000383759.7">
    <property type="protein sequence ID" value="ENSP00000373266.2"/>
    <property type="RefSeq nucleotide sequence ID" value="NM_015873.4"/>
    <property type="RefSeq protein sequence ID" value="NP_056957.3"/>
</dbReference>
<dbReference type="UCSC" id="uc003chj.4">
    <molecule id="O15195-1"/>
    <property type="organism name" value="human"/>
</dbReference>
<dbReference type="AGR" id="HGNC:30906"/>
<dbReference type="CTD" id="50853"/>
<dbReference type="DisGeNET" id="50853"/>
<dbReference type="GeneCards" id="VILL"/>
<dbReference type="HGNC" id="HGNC:30906">
    <property type="gene designation" value="VILL"/>
</dbReference>
<dbReference type="HPA" id="ENSG00000136059">
    <property type="expression patterns" value="Group enriched (intestine, stomach)"/>
</dbReference>
<dbReference type="MIM" id="619666">
    <property type="type" value="gene"/>
</dbReference>
<dbReference type="neXtProt" id="NX_O15195"/>
<dbReference type="OpenTargets" id="ENSG00000136059"/>
<dbReference type="PharmGKB" id="PA134911684"/>
<dbReference type="VEuPathDB" id="HostDB:ENSG00000136059"/>
<dbReference type="eggNOG" id="KOG0443">
    <property type="taxonomic scope" value="Eukaryota"/>
</dbReference>
<dbReference type="GeneTree" id="ENSGT00940000160253"/>
<dbReference type="HOGENOM" id="CLU_002568_3_1_1"/>
<dbReference type="InParanoid" id="O15195"/>
<dbReference type="OMA" id="LIFVWIG"/>
<dbReference type="OrthoDB" id="6375767at2759"/>
<dbReference type="PAN-GO" id="O15195">
    <property type="GO annotations" value="7 GO annotations based on evolutionary models"/>
</dbReference>
<dbReference type="PhylomeDB" id="O15195"/>
<dbReference type="TreeFam" id="TF313468"/>
<dbReference type="PathwayCommons" id="O15195"/>
<dbReference type="SignaLink" id="O15195"/>
<dbReference type="BioGRID-ORCS" id="50853">
    <property type="hits" value="11 hits in 1153 CRISPR screens"/>
</dbReference>
<dbReference type="CD-CODE" id="91857CE7">
    <property type="entry name" value="Nucleolus"/>
</dbReference>
<dbReference type="ChiTaRS" id="VILL">
    <property type="organism name" value="human"/>
</dbReference>
<dbReference type="GenomeRNAi" id="50853"/>
<dbReference type="Pharos" id="O15195">
    <property type="development level" value="Tbio"/>
</dbReference>
<dbReference type="PRO" id="PR:O15195"/>
<dbReference type="Proteomes" id="UP000005640">
    <property type="component" value="Chromosome 3"/>
</dbReference>
<dbReference type="RNAct" id="O15195">
    <property type="molecule type" value="protein"/>
</dbReference>
<dbReference type="Bgee" id="ENSG00000136059">
    <property type="expression patterns" value="Expressed in mucosa of transverse colon and 114 other cell types or tissues"/>
</dbReference>
<dbReference type="ExpressionAtlas" id="O15195">
    <property type="expression patterns" value="baseline and differential"/>
</dbReference>
<dbReference type="GO" id="GO:0015629">
    <property type="term" value="C:actin cytoskeleton"/>
    <property type="evidence" value="ECO:0000318"/>
    <property type="project" value="GO_Central"/>
</dbReference>
<dbReference type="GO" id="GO:0005737">
    <property type="term" value="C:cytoplasm"/>
    <property type="evidence" value="ECO:0000318"/>
    <property type="project" value="GO_Central"/>
</dbReference>
<dbReference type="GO" id="GO:0051015">
    <property type="term" value="F:actin filament binding"/>
    <property type="evidence" value="ECO:0000318"/>
    <property type="project" value="GO_Central"/>
</dbReference>
<dbReference type="GO" id="GO:0005546">
    <property type="term" value="F:phosphatidylinositol-4,5-bisphosphate binding"/>
    <property type="evidence" value="ECO:0000318"/>
    <property type="project" value="GO_Central"/>
</dbReference>
<dbReference type="GO" id="GO:0005200">
    <property type="term" value="F:structural constituent of cytoskeleton"/>
    <property type="evidence" value="ECO:0000304"/>
    <property type="project" value="ProtInc"/>
</dbReference>
<dbReference type="GO" id="GO:0051014">
    <property type="term" value="P:actin filament severing"/>
    <property type="evidence" value="ECO:0000318"/>
    <property type="project" value="GO_Central"/>
</dbReference>
<dbReference type="GO" id="GO:0008154">
    <property type="term" value="P:actin polymerization or depolymerization"/>
    <property type="evidence" value="ECO:0000318"/>
    <property type="project" value="GO_Central"/>
</dbReference>
<dbReference type="GO" id="GO:0051016">
    <property type="term" value="P:barbed-end actin filament capping"/>
    <property type="evidence" value="ECO:0000318"/>
    <property type="project" value="GO_Central"/>
</dbReference>
<dbReference type="CDD" id="cd11290">
    <property type="entry name" value="gelsolin_S1_like"/>
    <property type="match status" value="1"/>
</dbReference>
<dbReference type="CDD" id="cd11289">
    <property type="entry name" value="gelsolin_S2_like"/>
    <property type="match status" value="1"/>
</dbReference>
<dbReference type="CDD" id="cd11292">
    <property type="entry name" value="gelsolin_S3_like"/>
    <property type="match status" value="1"/>
</dbReference>
<dbReference type="CDD" id="cd11293">
    <property type="entry name" value="gelsolin_S4_like"/>
    <property type="match status" value="1"/>
</dbReference>
<dbReference type="CDD" id="cd11288">
    <property type="entry name" value="gelsolin_S5_like"/>
    <property type="match status" value="1"/>
</dbReference>
<dbReference type="CDD" id="cd11291">
    <property type="entry name" value="gelsolin_S6_like"/>
    <property type="match status" value="1"/>
</dbReference>
<dbReference type="FunFam" id="3.40.20.10:FF:000001">
    <property type="entry name" value="Gelsolin"/>
    <property type="match status" value="1"/>
</dbReference>
<dbReference type="FunFam" id="3.40.20.10:FF:000005">
    <property type="entry name" value="Gelsolin"/>
    <property type="match status" value="1"/>
</dbReference>
<dbReference type="FunFam" id="1.10.950.10:FF:000007">
    <property type="entry name" value="Villin like"/>
    <property type="match status" value="1"/>
</dbReference>
<dbReference type="FunFam" id="3.40.20.10:FF:000050">
    <property type="entry name" value="Villin like"/>
    <property type="match status" value="1"/>
</dbReference>
<dbReference type="Gene3D" id="3.40.20.10">
    <property type="entry name" value="Severin"/>
    <property type="match status" value="6"/>
</dbReference>
<dbReference type="Gene3D" id="1.10.950.10">
    <property type="entry name" value="Villin headpiece domain"/>
    <property type="match status" value="1"/>
</dbReference>
<dbReference type="InterPro" id="IPR029006">
    <property type="entry name" value="ADF-H/Gelsolin-like_dom_sf"/>
</dbReference>
<dbReference type="InterPro" id="IPR007123">
    <property type="entry name" value="Gelsolin-like_dom"/>
</dbReference>
<dbReference type="InterPro" id="IPR036180">
    <property type="entry name" value="Gelsolin-like_dom_sf"/>
</dbReference>
<dbReference type="InterPro" id="IPR007122">
    <property type="entry name" value="Villin/Gelsolin"/>
</dbReference>
<dbReference type="InterPro" id="IPR003128">
    <property type="entry name" value="Villin_headpiece"/>
</dbReference>
<dbReference type="InterPro" id="IPR036886">
    <property type="entry name" value="Villin_headpiece_dom_sf"/>
</dbReference>
<dbReference type="PANTHER" id="PTHR11977">
    <property type="entry name" value="VILLIN"/>
    <property type="match status" value="1"/>
</dbReference>
<dbReference type="PANTHER" id="PTHR11977:SF30">
    <property type="entry name" value="VILLIN-LIKE PROTEIN"/>
    <property type="match status" value="1"/>
</dbReference>
<dbReference type="Pfam" id="PF00626">
    <property type="entry name" value="Gelsolin"/>
    <property type="match status" value="6"/>
</dbReference>
<dbReference type="Pfam" id="PF02209">
    <property type="entry name" value="VHP"/>
    <property type="match status" value="1"/>
</dbReference>
<dbReference type="PRINTS" id="PR00597">
    <property type="entry name" value="GELSOLIN"/>
</dbReference>
<dbReference type="SMART" id="SM00262">
    <property type="entry name" value="GEL"/>
    <property type="match status" value="6"/>
</dbReference>
<dbReference type="SMART" id="SM00153">
    <property type="entry name" value="VHP"/>
    <property type="match status" value="1"/>
</dbReference>
<dbReference type="SUPFAM" id="SSF55753">
    <property type="entry name" value="Actin depolymerizing proteins"/>
    <property type="match status" value="4"/>
</dbReference>
<dbReference type="SUPFAM" id="SSF82754">
    <property type="entry name" value="C-terminal, gelsolin-like domain of Sec23/24"/>
    <property type="match status" value="2"/>
</dbReference>
<dbReference type="SUPFAM" id="SSF47050">
    <property type="entry name" value="VHP, Villin headpiece domain"/>
    <property type="match status" value="1"/>
</dbReference>
<dbReference type="PROSITE" id="PS51089">
    <property type="entry name" value="HP"/>
    <property type="match status" value="1"/>
</dbReference>
<organism>
    <name type="scientific">Homo sapiens</name>
    <name type="common">Human</name>
    <dbReference type="NCBI Taxonomy" id="9606"/>
    <lineage>
        <taxon>Eukaryota</taxon>
        <taxon>Metazoa</taxon>
        <taxon>Chordata</taxon>
        <taxon>Craniata</taxon>
        <taxon>Vertebrata</taxon>
        <taxon>Euteleostomi</taxon>
        <taxon>Mammalia</taxon>
        <taxon>Eutheria</taxon>
        <taxon>Euarchontoglires</taxon>
        <taxon>Primates</taxon>
        <taxon>Haplorrhini</taxon>
        <taxon>Catarrhini</taxon>
        <taxon>Hominidae</taxon>
        <taxon>Homo</taxon>
    </lineage>
</organism>
<evidence type="ECO:0000255" key="1">
    <source>
        <dbReference type="PROSITE-ProRule" id="PRU00595"/>
    </source>
</evidence>
<evidence type="ECO:0000256" key="2">
    <source>
        <dbReference type="SAM" id="MobiDB-lite"/>
    </source>
</evidence>
<evidence type="ECO:0000269" key="3">
    <source>
    </source>
</evidence>
<evidence type="ECO:0000303" key="4">
    <source>
    </source>
</evidence>
<evidence type="ECO:0000305" key="5"/>
<protein>
    <recommendedName>
        <fullName>Villin-like protein</fullName>
    </recommendedName>
</protein>
<gene>
    <name type="primary">VILL</name>
</gene>
<name>VILL_HUMAN</name>
<comment type="function">
    <text>Possible tumor suppressor.</text>
</comment>
<comment type="interaction">
    <interactant intactId="EBI-21845957">
        <id>O15195-2</id>
    </interactant>
    <interactant intactId="EBI-725647">
        <id>Q99732</id>
        <label>LITAF</label>
    </interactant>
    <organismsDiffer>false</organismsDiffer>
    <experiments>3</experiments>
</comment>
<comment type="interaction">
    <interactant intactId="EBI-21845957">
        <id>O15195-2</id>
    </interactant>
    <interactant intactId="EBI-366182">
        <id>P10636</id>
        <label>MAPT</label>
    </interactant>
    <organismsDiffer>false</organismsDiffer>
    <experiments>3</experiments>
</comment>
<comment type="interaction">
    <interactant intactId="EBI-21845957">
        <id>O15195-2</id>
    </interactant>
    <interactant intactId="EBI-748974">
        <id>Q96CV9</id>
        <label>OPTN</label>
    </interactant>
    <organismsDiffer>false</organismsDiffer>
    <experiments>3</experiments>
</comment>
<comment type="alternative products">
    <event type="alternative splicing"/>
    <isoform>
        <id>O15195-1</id>
        <name>1</name>
        <sequence type="displayed"/>
    </isoform>
    <isoform>
        <id>O15195-2</id>
        <name>2</name>
        <sequence type="described" ref="VSP_006729"/>
    </isoform>
</comment>
<comment type="tissue specificity">
    <text>Ubiquitously expressed in 16 tissues examined.</text>
</comment>
<comment type="similarity">
    <text evidence="5">Belongs to the villin/gelsolin family.</text>
</comment>
<comment type="sequence caution" evidence="5">
    <conflict type="erroneous initiation">
        <sequence resource="EMBL-CDS" id="AAH00243"/>
    </conflict>
</comment>
<comment type="sequence caution" evidence="5">
    <conflict type="erroneous initiation">
        <sequence resource="EMBL-CDS" id="AAH04300"/>
    </conflict>
</comment>